<name>G3P_COTJA</name>
<dbReference type="EC" id="1.2.1.12" evidence="1"/>
<dbReference type="EC" id="2.6.99.-" evidence="2"/>
<dbReference type="EMBL" id="Z19086">
    <property type="protein sequence ID" value="CAA79512.1"/>
    <property type="molecule type" value="mRNA"/>
</dbReference>
<dbReference type="RefSeq" id="XP_015728898.1">
    <property type="nucleotide sequence ID" value="XM_015873412.2"/>
</dbReference>
<dbReference type="SMR" id="Q05025"/>
<dbReference type="Ensembl" id="ENSCJPT00005028688.1">
    <property type="protein sequence ID" value="ENSCJPP00005020831.1"/>
    <property type="gene ID" value="ENSCJPG00005016719.1"/>
</dbReference>
<dbReference type="GeneID" id="107318960"/>
<dbReference type="KEGG" id="cjo:107318960"/>
<dbReference type="CTD" id="2597"/>
<dbReference type="GeneTree" id="ENSGT00940000153298"/>
<dbReference type="OrthoDB" id="1152826at2759"/>
<dbReference type="UniPathway" id="UPA00109">
    <property type="reaction ID" value="UER00184"/>
</dbReference>
<dbReference type="Proteomes" id="UP000694412">
    <property type="component" value="Chromosome 1"/>
</dbReference>
<dbReference type="GO" id="GO:0005737">
    <property type="term" value="C:cytoplasm"/>
    <property type="evidence" value="ECO:0000250"/>
    <property type="project" value="UniProtKB"/>
</dbReference>
<dbReference type="GO" id="GO:0005829">
    <property type="term" value="C:cytosol"/>
    <property type="evidence" value="ECO:0000250"/>
    <property type="project" value="UniProtKB"/>
</dbReference>
<dbReference type="GO" id="GO:0097452">
    <property type="term" value="C:GAIT complex"/>
    <property type="evidence" value="ECO:0007669"/>
    <property type="project" value="Ensembl"/>
</dbReference>
<dbReference type="GO" id="GO:0005811">
    <property type="term" value="C:lipid droplet"/>
    <property type="evidence" value="ECO:0007669"/>
    <property type="project" value="Ensembl"/>
</dbReference>
<dbReference type="GO" id="GO:0015630">
    <property type="term" value="C:microtubule cytoskeleton"/>
    <property type="evidence" value="ECO:0000250"/>
    <property type="project" value="UniProtKB"/>
</dbReference>
<dbReference type="GO" id="GO:0031965">
    <property type="term" value="C:nuclear membrane"/>
    <property type="evidence" value="ECO:0007669"/>
    <property type="project" value="Ensembl"/>
</dbReference>
<dbReference type="GO" id="GO:0005634">
    <property type="term" value="C:nucleus"/>
    <property type="evidence" value="ECO:0000250"/>
    <property type="project" value="UniProtKB"/>
</dbReference>
<dbReference type="GO" id="GO:0005886">
    <property type="term" value="C:plasma membrane"/>
    <property type="evidence" value="ECO:0007669"/>
    <property type="project" value="Ensembl"/>
</dbReference>
<dbReference type="GO" id="GO:1990904">
    <property type="term" value="C:ribonucleoprotein complex"/>
    <property type="evidence" value="ECO:0007669"/>
    <property type="project" value="Ensembl"/>
</dbReference>
<dbReference type="GO" id="GO:0019828">
    <property type="term" value="F:aspartic-type endopeptidase inhibitor activity"/>
    <property type="evidence" value="ECO:0007669"/>
    <property type="project" value="Ensembl"/>
</dbReference>
<dbReference type="GO" id="GO:0097718">
    <property type="term" value="F:disordered domain specific binding"/>
    <property type="evidence" value="ECO:0007669"/>
    <property type="project" value="Ensembl"/>
</dbReference>
<dbReference type="GO" id="GO:0004365">
    <property type="term" value="F:glyceraldehyde-3-phosphate dehydrogenase (NAD+) (phosphorylating) activity"/>
    <property type="evidence" value="ECO:0000250"/>
    <property type="project" value="UniProtKB"/>
</dbReference>
<dbReference type="GO" id="GO:0042802">
    <property type="term" value="F:identical protein binding"/>
    <property type="evidence" value="ECO:0007669"/>
    <property type="project" value="Ensembl"/>
</dbReference>
<dbReference type="GO" id="GO:0008017">
    <property type="term" value="F:microtubule binding"/>
    <property type="evidence" value="ECO:0000250"/>
    <property type="project" value="UniProtKB"/>
</dbReference>
<dbReference type="GO" id="GO:0051287">
    <property type="term" value="F:NAD binding"/>
    <property type="evidence" value="ECO:0007669"/>
    <property type="project" value="InterPro"/>
</dbReference>
<dbReference type="GO" id="GO:0050661">
    <property type="term" value="F:NADP binding"/>
    <property type="evidence" value="ECO:0007669"/>
    <property type="project" value="InterPro"/>
</dbReference>
<dbReference type="GO" id="GO:0035605">
    <property type="term" value="F:peptidyl-cysteine S-nitrosylase activity"/>
    <property type="evidence" value="ECO:0000250"/>
    <property type="project" value="UniProtKB"/>
</dbReference>
<dbReference type="GO" id="GO:0061844">
    <property type="term" value="P:antimicrobial humoral immune response mediated by antimicrobial peptide"/>
    <property type="evidence" value="ECO:0007669"/>
    <property type="project" value="Ensembl"/>
</dbReference>
<dbReference type="GO" id="GO:0071346">
    <property type="term" value="P:cellular response to type II interferon"/>
    <property type="evidence" value="ECO:0007669"/>
    <property type="project" value="Ensembl"/>
</dbReference>
<dbReference type="GO" id="GO:0050832">
    <property type="term" value="P:defense response to fungus"/>
    <property type="evidence" value="ECO:0007669"/>
    <property type="project" value="Ensembl"/>
</dbReference>
<dbReference type="GO" id="GO:0006006">
    <property type="term" value="P:glucose metabolic process"/>
    <property type="evidence" value="ECO:0007669"/>
    <property type="project" value="InterPro"/>
</dbReference>
<dbReference type="GO" id="GO:0006096">
    <property type="term" value="P:glycolytic process"/>
    <property type="evidence" value="ECO:0007669"/>
    <property type="project" value="UniProtKB-UniPathway"/>
</dbReference>
<dbReference type="GO" id="GO:0051873">
    <property type="term" value="P:killing by host of symbiont cells"/>
    <property type="evidence" value="ECO:0007669"/>
    <property type="project" value="Ensembl"/>
</dbReference>
<dbReference type="GO" id="GO:0000226">
    <property type="term" value="P:microtubule cytoskeleton organization"/>
    <property type="evidence" value="ECO:0000250"/>
    <property type="project" value="UniProtKB"/>
</dbReference>
<dbReference type="GO" id="GO:0017148">
    <property type="term" value="P:negative regulation of translation"/>
    <property type="evidence" value="ECO:0007669"/>
    <property type="project" value="Ensembl"/>
</dbReference>
<dbReference type="GO" id="GO:0051402">
    <property type="term" value="P:neuron apoptotic process"/>
    <property type="evidence" value="ECO:0000250"/>
    <property type="project" value="UniProtKB"/>
</dbReference>
<dbReference type="GO" id="GO:0035606">
    <property type="term" value="P:peptidyl-cysteine S-trans-nitrosylation"/>
    <property type="evidence" value="ECO:0000250"/>
    <property type="project" value="UniProtKB"/>
</dbReference>
<dbReference type="GO" id="GO:0043123">
    <property type="term" value="P:positive regulation of canonical NF-kappaB signal transduction"/>
    <property type="evidence" value="ECO:0000250"/>
    <property type="project" value="UniProtKB"/>
</dbReference>
<dbReference type="GO" id="GO:0032481">
    <property type="term" value="P:positive regulation of type I interferon production"/>
    <property type="evidence" value="ECO:0000250"/>
    <property type="project" value="UniProtKB"/>
</dbReference>
<dbReference type="GO" id="GO:0050821">
    <property type="term" value="P:protein stabilization"/>
    <property type="evidence" value="ECO:0000250"/>
    <property type="project" value="UniProtKB"/>
</dbReference>
<dbReference type="CDD" id="cd18126">
    <property type="entry name" value="GAPDH_I_C"/>
    <property type="match status" value="1"/>
</dbReference>
<dbReference type="CDD" id="cd05214">
    <property type="entry name" value="GAPDH_I_N"/>
    <property type="match status" value="1"/>
</dbReference>
<dbReference type="FunFam" id="3.30.360.10:FF:000001">
    <property type="entry name" value="Glyceraldehyde-3-phosphate dehydrogenase"/>
    <property type="match status" value="1"/>
</dbReference>
<dbReference type="FunFam" id="3.40.50.720:FF:001161">
    <property type="entry name" value="Glyceraldehyde-3-phosphate dehydrogenase"/>
    <property type="match status" value="1"/>
</dbReference>
<dbReference type="Gene3D" id="3.30.360.10">
    <property type="entry name" value="Dihydrodipicolinate Reductase, domain 2"/>
    <property type="match status" value="1"/>
</dbReference>
<dbReference type="Gene3D" id="3.40.50.720">
    <property type="entry name" value="NAD(P)-binding Rossmann-like Domain"/>
    <property type="match status" value="1"/>
</dbReference>
<dbReference type="InterPro" id="IPR020831">
    <property type="entry name" value="GlycerAld/Erythrose_P_DH"/>
</dbReference>
<dbReference type="InterPro" id="IPR020830">
    <property type="entry name" value="GlycerAld_3-P_DH_AS"/>
</dbReference>
<dbReference type="InterPro" id="IPR020829">
    <property type="entry name" value="GlycerAld_3-P_DH_cat"/>
</dbReference>
<dbReference type="InterPro" id="IPR020828">
    <property type="entry name" value="GlycerAld_3-P_DH_NAD(P)-bd"/>
</dbReference>
<dbReference type="InterPro" id="IPR006424">
    <property type="entry name" value="Glyceraldehyde-3-P_DH_1"/>
</dbReference>
<dbReference type="InterPro" id="IPR036291">
    <property type="entry name" value="NAD(P)-bd_dom_sf"/>
</dbReference>
<dbReference type="NCBIfam" id="TIGR01534">
    <property type="entry name" value="GAPDH-I"/>
    <property type="match status" value="1"/>
</dbReference>
<dbReference type="PANTHER" id="PTHR10836">
    <property type="entry name" value="GLYCERALDEHYDE 3-PHOSPHATE DEHYDROGENASE"/>
    <property type="match status" value="1"/>
</dbReference>
<dbReference type="PANTHER" id="PTHR10836:SF111">
    <property type="entry name" value="GLYCERALDEHYDE-3-PHOSPHATE DEHYDROGENASE"/>
    <property type="match status" value="1"/>
</dbReference>
<dbReference type="Pfam" id="PF02800">
    <property type="entry name" value="Gp_dh_C"/>
    <property type="match status" value="1"/>
</dbReference>
<dbReference type="Pfam" id="PF00044">
    <property type="entry name" value="Gp_dh_N"/>
    <property type="match status" value="1"/>
</dbReference>
<dbReference type="PIRSF" id="PIRSF000149">
    <property type="entry name" value="GAP_DH"/>
    <property type="match status" value="1"/>
</dbReference>
<dbReference type="PRINTS" id="PR00078">
    <property type="entry name" value="G3PDHDRGNASE"/>
</dbReference>
<dbReference type="SMART" id="SM00846">
    <property type="entry name" value="Gp_dh_N"/>
    <property type="match status" value="1"/>
</dbReference>
<dbReference type="SUPFAM" id="SSF55347">
    <property type="entry name" value="Glyceraldehyde-3-phosphate dehydrogenase-like, C-terminal domain"/>
    <property type="match status" value="1"/>
</dbReference>
<dbReference type="SUPFAM" id="SSF51735">
    <property type="entry name" value="NAD(P)-binding Rossmann-fold domains"/>
    <property type="match status" value="1"/>
</dbReference>
<dbReference type="PROSITE" id="PS00071">
    <property type="entry name" value="GAPDH"/>
    <property type="match status" value="1"/>
</dbReference>
<accession>Q05025</accession>
<keyword id="KW-0053">Apoptosis</keyword>
<keyword id="KW-0963">Cytoplasm</keyword>
<keyword id="KW-0206">Cytoskeleton</keyword>
<keyword id="KW-0324">Glycolysis</keyword>
<keyword id="KW-0520">NAD</keyword>
<keyword id="KW-0539">Nucleus</keyword>
<keyword id="KW-0560">Oxidoreductase</keyword>
<keyword id="KW-1185">Reference proteome</keyword>
<keyword id="KW-0702">S-nitrosylation</keyword>
<keyword id="KW-0808">Transferase</keyword>
<sequence>MVKVGVNGFGRIGRLVTRAAVLSGKVQVVAINDPFIDLNYMVYMFKYDSTHGHFKGTVKAENGKLVINGNAITIFQERDPSNIKWGDAGAEYVVESTGVFTTMEKAGAHLKGGAKRVIISAPSADAPMFVMGVNHEKYDKSLKIVSNASCTTNCLAPLAKVIHDNFGIVEGLMTTVHAITATQKTVDGPSGKLWRDGRGAAQNIIPASTGAAKAVGKVIPELNGKLTGMAFRVPTPNVSVVDLTCRLEKPAKYDDIKRVVKAAAEGPLKGILGYTEDQVVSCDFNGDSHSSTFDAGAGIALNDNFVKLVSWYDNEFGYSNRVVDLMVHMASKE</sequence>
<feature type="chain" id="PRO_0000145498" description="Glyceraldehyde-3-phosphate dehydrogenase">
    <location>
        <begin position="1"/>
        <end position="333"/>
    </location>
</feature>
<feature type="active site" description="Nucleophile" evidence="4">
    <location>
        <position position="150"/>
    </location>
</feature>
<feature type="binding site" evidence="1">
    <location>
        <begin position="11"/>
        <end position="12"/>
    </location>
    <ligand>
        <name>NAD(+)</name>
        <dbReference type="ChEBI" id="CHEBI:57540"/>
    </ligand>
</feature>
<feature type="binding site" evidence="1">
    <location>
        <position position="33"/>
    </location>
    <ligand>
        <name>NAD(+)</name>
        <dbReference type="ChEBI" id="CHEBI:57540"/>
    </ligand>
</feature>
<feature type="binding site" evidence="1">
    <location>
        <position position="78"/>
    </location>
    <ligand>
        <name>NAD(+)</name>
        <dbReference type="ChEBI" id="CHEBI:57540"/>
    </ligand>
</feature>
<feature type="binding site" evidence="1">
    <location>
        <position position="120"/>
    </location>
    <ligand>
        <name>NAD(+)</name>
        <dbReference type="ChEBI" id="CHEBI:57540"/>
    </ligand>
</feature>
<feature type="binding site" evidence="3">
    <location>
        <begin position="149"/>
        <end position="151"/>
    </location>
    <ligand>
        <name>D-glyceraldehyde 3-phosphate</name>
        <dbReference type="ChEBI" id="CHEBI:59776"/>
    </ligand>
</feature>
<feature type="binding site" evidence="3">
    <location>
        <position position="180"/>
    </location>
    <ligand>
        <name>D-glyceraldehyde 3-phosphate</name>
        <dbReference type="ChEBI" id="CHEBI:59776"/>
    </ligand>
</feature>
<feature type="binding site" evidence="3">
    <location>
        <begin position="209"/>
        <end position="210"/>
    </location>
    <ligand>
        <name>D-glyceraldehyde 3-phosphate</name>
        <dbReference type="ChEBI" id="CHEBI:59776"/>
    </ligand>
</feature>
<feature type="binding site" evidence="3">
    <location>
        <position position="232"/>
    </location>
    <ligand>
        <name>D-glyceraldehyde 3-phosphate</name>
        <dbReference type="ChEBI" id="CHEBI:59776"/>
    </ligand>
</feature>
<feature type="binding site" evidence="1">
    <location>
        <position position="314"/>
    </location>
    <ligand>
        <name>NAD(+)</name>
        <dbReference type="ChEBI" id="CHEBI:57540"/>
    </ligand>
</feature>
<feature type="site" description="Activates thiol group during catalysis" evidence="1">
    <location>
        <position position="177"/>
    </location>
</feature>
<feature type="modified residue" description="S-nitrosocysteine" evidence="2">
    <location>
        <position position="150"/>
    </location>
</feature>
<protein>
    <recommendedName>
        <fullName>Glyceraldehyde-3-phosphate dehydrogenase</fullName>
        <shortName>GAPDH</shortName>
        <ecNumber evidence="1">1.2.1.12</ecNumber>
    </recommendedName>
    <alternativeName>
        <fullName evidence="5">Peptidyl-cysteine S-nitrosylase GAPDH</fullName>
        <ecNumber evidence="2">2.6.99.-</ecNumber>
    </alternativeName>
</protein>
<proteinExistence type="evidence at transcript level"/>
<comment type="function">
    <text evidence="1 2">Has both glyceraldehyde-3-phosphate dehydrogenase and nitrosylase activities, thereby playing a role in glycolysis and nuclear functions, respectively. Glyceraldehyde-3-phosphate dehydrogenase is a key enzyme in glycolysis that catalyzes the first step of the pathway by converting D-glyceraldehyde 3-phosphate (G3P) into 3-phospho-D-glyceroyl phosphate (By similarity). Participates in nuclear events including transcription, RNA transport, DNA replication and apoptosis. Nuclear functions are probably due to the nitrosylase activity that mediates cysteine S-nitrosylation of nuclear target proteins such as SIRT1, HDAC2 and PRKDC (By similarity).</text>
</comment>
<comment type="catalytic activity">
    <reaction evidence="1 4">
        <text>D-glyceraldehyde 3-phosphate + phosphate + NAD(+) = (2R)-3-phospho-glyceroyl phosphate + NADH + H(+)</text>
        <dbReference type="Rhea" id="RHEA:10300"/>
        <dbReference type="ChEBI" id="CHEBI:15378"/>
        <dbReference type="ChEBI" id="CHEBI:43474"/>
        <dbReference type="ChEBI" id="CHEBI:57540"/>
        <dbReference type="ChEBI" id="CHEBI:57604"/>
        <dbReference type="ChEBI" id="CHEBI:57945"/>
        <dbReference type="ChEBI" id="CHEBI:59776"/>
        <dbReference type="EC" id="1.2.1.12"/>
    </reaction>
</comment>
<comment type="catalytic activity">
    <reaction evidence="2">
        <text>S-nitroso-L-cysteinyl-[GAPDH] + L-cysteinyl-[protein] = L-cysteinyl-[GAPDH] + S-nitroso-L-cysteinyl-[protein]</text>
        <dbReference type="Rhea" id="RHEA:66684"/>
        <dbReference type="Rhea" id="RHEA-COMP:10131"/>
        <dbReference type="Rhea" id="RHEA-COMP:17089"/>
        <dbReference type="Rhea" id="RHEA-COMP:17090"/>
        <dbReference type="Rhea" id="RHEA-COMP:17091"/>
        <dbReference type="ChEBI" id="CHEBI:29950"/>
        <dbReference type="ChEBI" id="CHEBI:149494"/>
    </reaction>
    <physiologicalReaction direction="left-to-right" evidence="2">
        <dbReference type="Rhea" id="RHEA:66685"/>
    </physiologicalReaction>
</comment>
<comment type="pathway">
    <text>Carbohydrate degradation; glycolysis; pyruvate from D-glyceraldehyde 3-phosphate: step 1/5.</text>
</comment>
<comment type="subunit">
    <text evidence="1">Homotetramer.</text>
</comment>
<comment type="subcellular location">
    <subcellularLocation>
        <location evidence="2">Cytoplasm</location>
        <location evidence="2">Cytosol</location>
    </subcellularLocation>
    <subcellularLocation>
        <location evidence="2">Cytoplasm</location>
        <location evidence="2">Cytoskeleton</location>
    </subcellularLocation>
    <subcellularLocation>
        <location evidence="2">Nucleus</location>
    </subcellularLocation>
</comment>
<comment type="PTM">
    <text evidence="2">S-nitrosylation of Cys-150 leads to translocation to the nucleus.</text>
</comment>
<comment type="similarity">
    <text evidence="5">Belongs to the glyceraldehyde-3-phosphate dehydrogenase family.</text>
</comment>
<reference key="1">
    <citation type="journal article" date="1993" name="Gene">
        <title>Sequence and expression of a glyceraldehyde-3-phosphate dehydrogenase-encoding gene from quail embryo fibroblasts.</title>
        <authorList>
            <person name="Weiskirchen R."/>
            <person name="Siemeister G."/>
            <person name="Hartl M."/>
            <person name="Bister K."/>
        </authorList>
    </citation>
    <scope>NUCLEOTIDE SEQUENCE [MRNA]</scope>
    <source>
        <tissue>Fibroblast</tissue>
    </source>
</reference>
<gene>
    <name type="primary">GAPDH</name>
    <name type="synonym">GAPD</name>
</gene>
<evidence type="ECO:0000250" key="1">
    <source>
        <dbReference type="UniProtKB" id="P04406"/>
    </source>
</evidence>
<evidence type="ECO:0000250" key="2">
    <source>
        <dbReference type="UniProtKB" id="P04797"/>
    </source>
</evidence>
<evidence type="ECO:0000250" key="3">
    <source>
        <dbReference type="UniProtKB" id="P22513"/>
    </source>
</evidence>
<evidence type="ECO:0000255" key="4">
    <source>
        <dbReference type="PROSITE-ProRule" id="PRU10009"/>
    </source>
</evidence>
<evidence type="ECO:0000305" key="5"/>
<organism>
    <name type="scientific">Coturnix japonica</name>
    <name type="common">Japanese quail</name>
    <name type="synonym">Coturnix coturnix japonica</name>
    <dbReference type="NCBI Taxonomy" id="93934"/>
    <lineage>
        <taxon>Eukaryota</taxon>
        <taxon>Metazoa</taxon>
        <taxon>Chordata</taxon>
        <taxon>Craniata</taxon>
        <taxon>Vertebrata</taxon>
        <taxon>Euteleostomi</taxon>
        <taxon>Archelosauria</taxon>
        <taxon>Archosauria</taxon>
        <taxon>Dinosauria</taxon>
        <taxon>Saurischia</taxon>
        <taxon>Theropoda</taxon>
        <taxon>Coelurosauria</taxon>
        <taxon>Aves</taxon>
        <taxon>Neognathae</taxon>
        <taxon>Galloanserae</taxon>
        <taxon>Galliformes</taxon>
        <taxon>Phasianidae</taxon>
        <taxon>Perdicinae</taxon>
        <taxon>Coturnix</taxon>
    </lineage>
</organism>